<name>PCDG5_HUMAN</name>
<dbReference type="EMBL" id="AF152325">
    <property type="protein sequence ID" value="AAD43719.1"/>
    <property type="molecule type" value="mRNA"/>
</dbReference>
<dbReference type="EMBL" id="AF152512">
    <property type="protein sequence ID" value="AAD43772.1"/>
    <property type="molecule type" value="mRNA"/>
</dbReference>
<dbReference type="EMBL" id="CH471062">
    <property type="protein sequence ID" value="EAW61938.1"/>
    <property type="molecule type" value="Genomic_DNA"/>
</dbReference>
<dbReference type="EMBL" id="BC104926">
    <property type="protein sequence ID" value="AAI04927.1"/>
    <property type="molecule type" value="mRNA"/>
</dbReference>
<dbReference type="EMBL" id="BC113460">
    <property type="protein sequence ID" value="AAI13461.1"/>
    <property type="molecule type" value="mRNA"/>
</dbReference>
<dbReference type="CCDS" id="CCDS54925.1">
    <molecule id="Q9Y5G8-1"/>
</dbReference>
<dbReference type="CCDS" id="CCDS75333.1">
    <molecule id="Q9Y5G8-2"/>
</dbReference>
<dbReference type="RefSeq" id="NP_061741.1">
    <molecule id="Q9Y5G8-1"/>
    <property type="nucleotide sequence ID" value="NM_018918.3"/>
</dbReference>
<dbReference type="RefSeq" id="NP_114443.1">
    <molecule id="Q9Y5G8-2"/>
    <property type="nucleotide sequence ID" value="NM_032054.2"/>
</dbReference>
<dbReference type="SMR" id="Q9Y5G8"/>
<dbReference type="BioGRID" id="121050">
    <property type="interactions" value="63"/>
</dbReference>
<dbReference type="FunCoup" id="Q9Y5G8">
    <property type="interactions" value="67"/>
</dbReference>
<dbReference type="IntAct" id="Q9Y5G8">
    <property type="interactions" value="60"/>
</dbReference>
<dbReference type="STRING" id="9606.ENSP00000429834"/>
<dbReference type="GlyCosmos" id="Q9Y5G8">
    <property type="glycosylation" value="2 sites, No reported glycans"/>
</dbReference>
<dbReference type="GlyGen" id="Q9Y5G8">
    <property type="glycosylation" value="2 sites"/>
</dbReference>
<dbReference type="iPTMnet" id="Q9Y5G8"/>
<dbReference type="PhosphoSitePlus" id="Q9Y5G8"/>
<dbReference type="BioMuta" id="PCDHGA5"/>
<dbReference type="DMDM" id="37999838"/>
<dbReference type="jPOST" id="Q9Y5G8"/>
<dbReference type="MassIVE" id="Q9Y5G8"/>
<dbReference type="PaxDb" id="9606-ENSP00000429834"/>
<dbReference type="PeptideAtlas" id="Q9Y5G8"/>
<dbReference type="ProteomicsDB" id="86377">
    <molecule id="Q9Y5G8-1"/>
</dbReference>
<dbReference type="ProteomicsDB" id="86378">
    <molecule id="Q9Y5G8-2"/>
</dbReference>
<dbReference type="Antibodypedia" id="57471">
    <property type="antibodies" value="98 antibodies from 16 providers"/>
</dbReference>
<dbReference type="DNASU" id="56110"/>
<dbReference type="Ensembl" id="ENST00000518069.2">
    <molecule id="Q9Y5G8-1"/>
    <property type="protein sequence ID" value="ENSP00000429834.1"/>
    <property type="gene ID" value="ENSG00000253485.3"/>
</dbReference>
<dbReference type="Ensembl" id="ENST00000611914.1">
    <molecule id="Q9Y5G8-2"/>
    <property type="protein sequence ID" value="ENSP00000480337.1"/>
    <property type="gene ID" value="ENSG00000253485.3"/>
</dbReference>
<dbReference type="GeneID" id="56110"/>
<dbReference type="KEGG" id="hsa:56110"/>
<dbReference type="MANE-Select" id="ENST00000518069.2">
    <property type="protein sequence ID" value="ENSP00000429834.1"/>
    <property type="RefSeq nucleotide sequence ID" value="NM_018918.3"/>
    <property type="RefSeq protein sequence ID" value="NP_061741.1"/>
</dbReference>
<dbReference type="UCSC" id="uc003lju.3">
    <molecule id="Q9Y5G8-1"/>
    <property type="organism name" value="human"/>
</dbReference>
<dbReference type="AGR" id="HGNC:8703"/>
<dbReference type="CTD" id="56110"/>
<dbReference type="DisGeNET" id="56110"/>
<dbReference type="GeneCards" id="PCDHGA5"/>
<dbReference type="HGNC" id="HGNC:8703">
    <property type="gene designation" value="PCDHGA5"/>
</dbReference>
<dbReference type="HPA" id="ENSG00000253485">
    <property type="expression patterns" value="Low tissue specificity"/>
</dbReference>
<dbReference type="MalaCards" id="PCDHGA5"/>
<dbReference type="MIM" id="604968">
    <property type="type" value="gene"/>
</dbReference>
<dbReference type="MIM" id="606292">
    <property type="type" value="gene"/>
</dbReference>
<dbReference type="neXtProt" id="NX_Q9Y5G8"/>
<dbReference type="OpenTargets" id="ENSG00000253485"/>
<dbReference type="PharmGKB" id="PA33051"/>
<dbReference type="VEuPathDB" id="HostDB:ENSG00000253485"/>
<dbReference type="eggNOG" id="KOG3594">
    <property type="taxonomic scope" value="Eukaryota"/>
</dbReference>
<dbReference type="GeneTree" id="ENSGT00940000165041"/>
<dbReference type="HOGENOM" id="CLU_006480_3_0_1"/>
<dbReference type="InParanoid" id="Q9Y5G8"/>
<dbReference type="OMA" id="LFTRSEY"/>
<dbReference type="OrthoDB" id="6252479at2759"/>
<dbReference type="PAN-GO" id="Q9Y5G8">
    <property type="GO annotations" value="2 GO annotations based on evolutionary models"/>
</dbReference>
<dbReference type="PhylomeDB" id="Q9Y5G8"/>
<dbReference type="TreeFam" id="TF332299"/>
<dbReference type="PathwayCommons" id="Q9Y5G8"/>
<dbReference type="SignaLink" id="Q9Y5G8"/>
<dbReference type="SIGNOR" id="Q9Y5G8"/>
<dbReference type="BioGRID-ORCS" id="56110">
    <property type="hits" value="12 hits in 1093 CRISPR screens"/>
</dbReference>
<dbReference type="GenomeRNAi" id="56110"/>
<dbReference type="Pharos" id="Q9Y5G8">
    <property type="development level" value="Tdark"/>
</dbReference>
<dbReference type="PRO" id="PR:Q9Y5G8"/>
<dbReference type="Proteomes" id="UP000005640">
    <property type="component" value="Chromosome 5"/>
</dbReference>
<dbReference type="RNAct" id="Q9Y5G8">
    <property type="molecule type" value="protein"/>
</dbReference>
<dbReference type="Bgee" id="ENSG00000253485">
    <property type="expression patterns" value="Expressed in cortical plate and 102 other cell types or tissues"/>
</dbReference>
<dbReference type="GO" id="GO:0005886">
    <property type="term" value="C:plasma membrane"/>
    <property type="evidence" value="ECO:0000318"/>
    <property type="project" value="GO_Central"/>
</dbReference>
<dbReference type="GO" id="GO:0005509">
    <property type="term" value="F:calcium ion binding"/>
    <property type="evidence" value="ECO:0007669"/>
    <property type="project" value="InterPro"/>
</dbReference>
<dbReference type="GO" id="GO:0007155">
    <property type="term" value="P:cell adhesion"/>
    <property type="evidence" value="ECO:0000318"/>
    <property type="project" value="GO_Central"/>
</dbReference>
<dbReference type="GO" id="GO:0007156">
    <property type="term" value="P:homophilic cell adhesion via plasma membrane adhesion molecules"/>
    <property type="evidence" value="ECO:0007669"/>
    <property type="project" value="InterPro"/>
</dbReference>
<dbReference type="GO" id="GO:0007399">
    <property type="term" value="P:nervous system development"/>
    <property type="evidence" value="ECO:0007669"/>
    <property type="project" value="UniProtKB-ARBA"/>
</dbReference>
<dbReference type="CDD" id="cd11304">
    <property type="entry name" value="Cadherin_repeat"/>
    <property type="match status" value="6"/>
</dbReference>
<dbReference type="FunFam" id="2.60.40.60:FF:000004">
    <property type="entry name" value="Protocadherin 1 gamma 2"/>
    <property type="match status" value="1"/>
</dbReference>
<dbReference type="FunFam" id="2.60.40.60:FF:000001">
    <property type="entry name" value="Protocadherin alpha 2"/>
    <property type="match status" value="1"/>
</dbReference>
<dbReference type="FunFam" id="2.60.40.60:FF:000002">
    <property type="entry name" value="Protocadherin alpha 2"/>
    <property type="match status" value="1"/>
</dbReference>
<dbReference type="FunFam" id="2.60.40.60:FF:000006">
    <property type="entry name" value="Protocadherin alpha 2"/>
    <property type="match status" value="1"/>
</dbReference>
<dbReference type="FunFam" id="2.60.40.60:FF:000129">
    <property type="entry name" value="protocadherin alpha-C2 isoform X1"/>
    <property type="match status" value="1"/>
</dbReference>
<dbReference type="FunFam" id="2.60.40.60:FF:000018">
    <property type="entry name" value="Protocadherin gamma c3"/>
    <property type="match status" value="1"/>
</dbReference>
<dbReference type="Gene3D" id="2.60.40.60">
    <property type="entry name" value="Cadherins"/>
    <property type="match status" value="6"/>
</dbReference>
<dbReference type="InterPro" id="IPR002126">
    <property type="entry name" value="Cadherin-like_dom"/>
</dbReference>
<dbReference type="InterPro" id="IPR015919">
    <property type="entry name" value="Cadherin-like_sf"/>
</dbReference>
<dbReference type="InterPro" id="IPR032455">
    <property type="entry name" value="Cadherin_C"/>
</dbReference>
<dbReference type="InterPro" id="IPR031904">
    <property type="entry name" value="Cadherin_CBD"/>
</dbReference>
<dbReference type="InterPro" id="IPR020894">
    <property type="entry name" value="Cadherin_CS"/>
</dbReference>
<dbReference type="InterPro" id="IPR013164">
    <property type="entry name" value="Cadherin_N"/>
</dbReference>
<dbReference type="InterPro" id="IPR050174">
    <property type="entry name" value="Protocadherin/Cadherin-CA"/>
</dbReference>
<dbReference type="PANTHER" id="PTHR24028">
    <property type="entry name" value="CADHERIN-87A"/>
    <property type="match status" value="1"/>
</dbReference>
<dbReference type="PANTHER" id="PTHR24028:SF105">
    <property type="entry name" value="PROTOCADHERIN GAMMA-A5"/>
    <property type="match status" value="1"/>
</dbReference>
<dbReference type="Pfam" id="PF00028">
    <property type="entry name" value="Cadherin"/>
    <property type="match status" value="5"/>
</dbReference>
<dbReference type="Pfam" id="PF08266">
    <property type="entry name" value="Cadherin_2"/>
    <property type="match status" value="1"/>
</dbReference>
<dbReference type="Pfam" id="PF16492">
    <property type="entry name" value="Cadherin_C_2"/>
    <property type="match status" value="1"/>
</dbReference>
<dbReference type="Pfam" id="PF15974">
    <property type="entry name" value="Cadherin_tail"/>
    <property type="match status" value="1"/>
</dbReference>
<dbReference type="PRINTS" id="PR00205">
    <property type="entry name" value="CADHERIN"/>
</dbReference>
<dbReference type="SMART" id="SM00112">
    <property type="entry name" value="CA"/>
    <property type="match status" value="6"/>
</dbReference>
<dbReference type="SUPFAM" id="SSF49313">
    <property type="entry name" value="Cadherin-like"/>
    <property type="match status" value="6"/>
</dbReference>
<dbReference type="PROSITE" id="PS00232">
    <property type="entry name" value="CADHERIN_1"/>
    <property type="match status" value="5"/>
</dbReference>
<dbReference type="PROSITE" id="PS50268">
    <property type="entry name" value="CADHERIN_2"/>
    <property type="match status" value="6"/>
</dbReference>
<organism>
    <name type="scientific">Homo sapiens</name>
    <name type="common">Human</name>
    <dbReference type="NCBI Taxonomy" id="9606"/>
    <lineage>
        <taxon>Eukaryota</taxon>
        <taxon>Metazoa</taxon>
        <taxon>Chordata</taxon>
        <taxon>Craniata</taxon>
        <taxon>Vertebrata</taxon>
        <taxon>Euteleostomi</taxon>
        <taxon>Mammalia</taxon>
        <taxon>Eutheria</taxon>
        <taxon>Euarchontoglires</taxon>
        <taxon>Primates</taxon>
        <taxon>Haplorrhini</taxon>
        <taxon>Catarrhini</taxon>
        <taxon>Hominidae</taxon>
        <taxon>Homo</taxon>
    </lineage>
</organism>
<evidence type="ECO:0000250" key="1"/>
<evidence type="ECO:0000255" key="2"/>
<evidence type="ECO:0000255" key="3">
    <source>
        <dbReference type="PROSITE-ProRule" id="PRU00043"/>
    </source>
</evidence>
<evidence type="ECO:0000256" key="4">
    <source>
        <dbReference type="SAM" id="MobiDB-lite"/>
    </source>
</evidence>
<evidence type="ECO:0000303" key="5">
    <source>
    </source>
</evidence>
<evidence type="ECO:0000303" key="6">
    <source>
    </source>
</evidence>
<keyword id="KW-0025">Alternative splicing</keyword>
<keyword id="KW-0106">Calcium</keyword>
<keyword id="KW-0130">Cell adhesion</keyword>
<keyword id="KW-1003">Cell membrane</keyword>
<keyword id="KW-0325">Glycoprotein</keyword>
<keyword id="KW-0472">Membrane</keyword>
<keyword id="KW-1267">Proteomics identification</keyword>
<keyword id="KW-1185">Reference proteome</keyword>
<keyword id="KW-0677">Repeat</keyword>
<keyword id="KW-0732">Signal</keyword>
<keyword id="KW-0812">Transmembrane</keyword>
<keyword id="KW-1133">Transmembrane helix</keyword>
<gene>
    <name type="primary">PCDHGA5</name>
</gene>
<accession>Q9Y5G8</accession>
<accession>Q2M3F5</accession>
<accession>Q9Y5D2</accession>
<proteinExistence type="evidence at protein level"/>
<reference key="1">
    <citation type="journal article" date="1999" name="Cell">
        <title>A striking organization of a large family of human neural cadherin-like cell adhesion genes.</title>
        <authorList>
            <person name="Wu Q."/>
            <person name="Maniatis T."/>
        </authorList>
    </citation>
    <scope>NUCLEOTIDE SEQUENCE [MRNA] (ISOFORMS 1 AND 2)</scope>
    <source>
        <tissue>Brain</tissue>
    </source>
</reference>
<reference key="2">
    <citation type="submission" date="2005-09" db="EMBL/GenBank/DDBJ databases">
        <authorList>
            <person name="Mural R.J."/>
            <person name="Istrail S."/>
            <person name="Sutton G.G."/>
            <person name="Florea L."/>
            <person name="Halpern A.L."/>
            <person name="Mobarry C.M."/>
            <person name="Lippert R."/>
            <person name="Walenz B."/>
            <person name="Shatkay H."/>
            <person name="Dew I."/>
            <person name="Miller J.R."/>
            <person name="Flanigan M.J."/>
            <person name="Edwards N.J."/>
            <person name="Bolanos R."/>
            <person name="Fasulo D."/>
            <person name="Halldorsson B.V."/>
            <person name="Hannenhalli S."/>
            <person name="Turner R."/>
            <person name="Yooseph S."/>
            <person name="Lu F."/>
            <person name="Nusskern D.R."/>
            <person name="Shue B.C."/>
            <person name="Zheng X.H."/>
            <person name="Zhong F."/>
            <person name="Delcher A.L."/>
            <person name="Huson D.H."/>
            <person name="Kravitz S.A."/>
            <person name="Mouchard L."/>
            <person name="Reinert K."/>
            <person name="Remington K.A."/>
            <person name="Clark A.G."/>
            <person name="Waterman M.S."/>
            <person name="Eichler E.E."/>
            <person name="Adams M.D."/>
            <person name="Hunkapiller M.W."/>
            <person name="Myers E.W."/>
            <person name="Venter J.C."/>
        </authorList>
    </citation>
    <scope>NUCLEOTIDE SEQUENCE [LARGE SCALE GENOMIC DNA]</scope>
</reference>
<reference key="3">
    <citation type="journal article" date="2004" name="Genome Res.">
        <title>The status, quality, and expansion of the NIH full-length cDNA project: the Mammalian Gene Collection (MGC).</title>
        <authorList>
            <consortium name="The MGC Project Team"/>
        </authorList>
    </citation>
    <scope>NUCLEOTIDE SEQUENCE [LARGE SCALE MRNA] (ISOFORM 2)</scope>
    <source>
        <tissue>Brain</tissue>
    </source>
</reference>
<feature type="signal peptide" evidence="2">
    <location>
        <begin position="1"/>
        <end position="29"/>
    </location>
</feature>
<feature type="chain" id="PRO_0000003956" description="Protocadherin gamma-A5">
    <location>
        <begin position="30"/>
        <end position="931"/>
    </location>
</feature>
<feature type="topological domain" description="Extracellular" evidence="2">
    <location>
        <begin position="30"/>
        <end position="692"/>
    </location>
</feature>
<feature type="transmembrane region" description="Helical" evidence="2">
    <location>
        <begin position="693"/>
        <end position="713"/>
    </location>
</feature>
<feature type="topological domain" description="Cytoplasmic" evidence="2">
    <location>
        <begin position="714"/>
        <end position="931"/>
    </location>
</feature>
<feature type="domain" description="Cadherin 1" evidence="3">
    <location>
        <begin position="30"/>
        <end position="133"/>
    </location>
</feature>
<feature type="domain" description="Cadherin 2" evidence="3">
    <location>
        <begin position="134"/>
        <end position="242"/>
    </location>
</feature>
<feature type="domain" description="Cadherin 3" evidence="3">
    <location>
        <begin position="243"/>
        <end position="347"/>
    </location>
</feature>
<feature type="domain" description="Cadherin 4" evidence="3">
    <location>
        <begin position="348"/>
        <end position="452"/>
    </location>
</feature>
<feature type="domain" description="Cadherin 5" evidence="3">
    <location>
        <begin position="453"/>
        <end position="562"/>
    </location>
</feature>
<feature type="domain" description="Cadherin 6" evidence="3">
    <location>
        <begin position="570"/>
        <end position="683"/>
    </location>
</feature>
<feature type="region of interest" description="Disordered" evidence="4">
    <location>
        <begin position="800"/>
        <end position="840"/>
    </location>
</feature>
<feature type="region of interest" description="Disordered" evidence="4">
    <location>
        <begin position="901"/>
        <end position="931"/>
    </location>
</feature>
<feature type="compositionally biased region" description="Polar residues" evidence="4">
    <location>
        <begin position="809"/>
        <end position="840"/>
    </location>
</feature>
<feature type="compositionally biased region" description="Basic residues" evidence="4">
    <location>
        <begin position="921"/>
        <end position="931"/>
    </location>
</feature>
<feature type="glycosylation site" description="N-linked (GlcNAc...) asparagine" evidence="2">
    <location>
        <position position="419"/>
    </location>
</feature>
<feature type="glycosylation site" description="N-linked (GlcNAc...) asparagine" evidence="2">
    <location>
        <position position="545"/>
    </location>
</feature>
<feature type="splice variant" id="VSP_008667" description="In isoform 2." evidence="5 6">
    <original>QAPPNT</original>
    <variation>VSFLFR</variation>
    <location>
        <begin position="808"/>
        <end position="813"/>
    </location>
</feature>
<feature type="splice variant" id="VSP_008668" description="In isoform 2." evidence="5 6">
    <location>
        <begin position="814"/>
        <end position="931"/>
    </location>
</feature>
<sequence length="931" mass="100935">MASPPRGWGCGELLLPFMLLGTLCEPGSGQIRYSMPEELDKGSFVGNIAKDLGLEPQELAERGVRIVSRGRTQLFALNPRSGSLVTAGRIDREELCAQSPLCVVNFNILVENKMKIYGVEVEIIDINDNFPRFRDEELKVKVNENAAAGTRLVLPFARDADVGVNSLRSYQLSSNLHFSLDVVSGTDGQKYPELVLEQPLDREKETVHDLLLTALDGGDPVLSGTTHIRVTVLDANDNAPLFTPSEYSVSVPENIPVGTRLLMLTATDPDEGINGKLTYSFRNEEEKISETFQLDSNLGEISTLQSLDYEESRFYLMEVVAQDGGALVASAKVVVTVQDVNDNAPEVILTSLTSSISEDCLPGTVIALFSVHDGDSGENGEIACSIPRNLPFKLEKSVDNYYHLLTTRDLDREETSDYNITLTVMDHGTPPLSTESHIPLKVADVNDNPPNFPQASYSTSVTENNPRGVSIFSVTAHDPDSGDNARVTYSLAEDTFQGAPLSSYVSINSDTGVLYALRSFDYEQLRDLQLWVTASDSGNPPLSSNVSLSLFVLDQNDNTPEILYPALPTDGSTGVELAPRSAEPGYLVTKVVAVDKDSGQNAWLSYRLLKASEPGLFAVGLHTGEVRTARALLDRDALKQSLVVAVEDHGQPPLSATFTVTVAVADRIPDILADLGSIKTPIDPEDLDLTLYLVVAVAAVSCVFLAFVIVLLVLRLRRWHKSRLLQAEGSRLAGVPASHFVGVDGVRAFLQTYSHEVSLTADSRKSHLIFPQPNYADTLLSEESCEKSEPLLMSDKVDANKEERRVQQAPPNTDWRFSQAQRPGTSGSQNGDDTGTWPNNQFDTEMLQAMILASASEAADGSSTLGGGAGTMGLSARYGPQFTLQHVPDYRQNVYIPGSNATLTNAAGKRDGKAPAGGNGNKKKSGKKEKK</sequence>
<protein>
    <recommendedName>
        <fullName>Protocadherin gamma-A5</fullName>
        <shortName>PCDH-gamma-A5</shortName>
    </recommendedName>
</protein>
<comment type="function">
    <text>Potential calcium-dependent cell-adhesion protein. May be involved in the establishment and maintenance of specific neuronal connections in the brain.</text>
</comment>
<comment type="subcellular location">
    <subcellularLocation>
        <location evidence="1">Cell membrane</location>
        <topology evidence="1">Single-pass type I membrane protein</topology>
    </subcellularLocation>
</comment>
<comment type="alternative products">
    <event type="alternative splicing"/>
    <isoform>
        <id>Q9Y5G8-1</id>
        <name>1</name>
        <sequence type="displayed"/>
    </isoform>
    <isoform>
        <id>Q9Y5G8-2</id>
        <name>2</name>
        <name>Short</name>
        <sequence type="described" ref="VSP_008667 VSP_008668"/>
    </isoform>
</comment>